<sequence>MKLNDIINIIEDIAPVNLKEGFDNVGLMVGDREKNITKILLALDCTEEVIKEAKEMGAELILTHHPLLFRKPSTITTDTLLGRKIISLIKNDINLYSAHTNWDSVKGGLNDTLVEILGFNKGIIMDKSPVDSEAGIGRVVELTKEMTVLEIINLIKSSLGVKNLRYAGDLNEVIKKIAIVNGSGQDFFGDAKKLGADLIITGDTTYHFVSDYKEMGLNILDIGHFNSEWPVLIKVSEKVKERLDSDVEFIVSKEAKDPFEFI</sequence>
<keyword id="KW-0479">Metal-binding</keyword>
<keyword id="KW-1185">Reference proteome</keyword>
<feature type="chain" id="PRO_0000147305" description="GTP cyclohydrolase 1 type 2 homolog">
    <location>
        <begin position="1"/>
        <end position="262"/>
    </location>
</feature>
<feature type="binding site" evidence="1">
    <location>
        <position position="64"/>
    </location>
    <ligand>
        <name>a divalent metal cation</name>
        <dbReference type="ChEBI" id="CHEBI:60240"/>
        <label>1</label>
    </ligand>
</feature>
<feature type="binding site" evidence="1">
    <location>
        <position position="65"/>
    </location>
    <ligand>
        <name>a divalent metal cation</name>
        <dbReference type="ChEBI" id="CHEBI:60240"/>
        <label>2</label>
    </ligand>
</feature>
<feature type="binding site" evidence="1">
    <location>
        <position position="103"/>
    </location>
    <ligand>
        <name>a divalent metal cation</name>
        <dbReference type="ChEBI" id="CHEBI:60240"/>
        <label>1</label>
    </ligand>
</feature>
<feature type="binding site" evidence="1">
    <location>
        <position position="224"/>
    </location>
    <ligand>
        <name>a divalent metal cation</name>
        <dbReference type="ChEBI" id="CHEBI:60240"/>
        <label>2</label>
    </ligand>
</feature>
<feature type="binding site" evidence="1">
    <location>
        <position position="228"/>
    </location>
    <ligand>
        <name>a divalent metal cation</name>
        <dbReference type="ChEBI" id="CHEBI:60240"/>
        <label>1</label>
    </ligand>
</feature>
<feature type="binding site" evidence="1">
    <location>
        <position position="228"/>
    </location>
    <ligand>
        <name>a divalent metal cation</name>
        <dbReference type="ChEBI" id="CHEBI:60240"/>
        <label>2</label>
    </ligand>
</feature>
<comment type="subunit">
    <text evidence="1">Homohexamer.</text>
</comment>
<comment type="similarity">
    <text evidence="2">Belongs to the GTP cyclohydrolase I type 2/NIF3 family.</text>
</comment>
<organism>
    <name type="scientific">Clostridium perfringens (strain 13 / Type A)</name>
    <dbReference type="NCBI Taxonomy" id="195102"/>
    <lineage>
        <taxon>Bacteria</taxon>
        <taxon>Bacillati</taxon>
        <taxon>Bacillota</taxon>
        <taxon>Clostridia</taxon>
        <taxon>Eubacteriales</taxon>
        <taxon>Clostridiaceae</taxon>
        <taxon>Clostridium</taxon>
    </lineage>
</organism>
<accession>Q8XIV9</accession>
<gene>
    <name type="ordered locus">CPE2004</name>
</gene>
<evidence type="ECO:0000250" key="1">
    <source>
        <dbReference type="UniProtKB" id="P0AFP6"/>
    </source>
</evidence>
<evidence type="ECO:0000305" key="2"/>
<protein>
    <recommendedName>
        <fullName>GTP cyclohydrolase 1 type 2 homolog</fullName>
    </recommendedName>
</protein>
<reference key="1">
    <citation type="journal article" date="2002" name="Proc. Natl. Acad. Sci. U.S.A.">
        <title>Complete genome sequence of Clostridium perfringens, an anaerobic flesh-eater.</title>
        <authorList>
            <person name="Shimizu T."/>
            <person name="Ohtani K."/>
            <person name="Hirakawa H."/>
            <person name="Ohshima K."/>
            <person name="Yamashita A."/>
            <person name="Shiba T."/>
            <person name="Ogasawara N."/>
            <person name="Hattori M."/>
            <person name="Kuhara S."/>
            <person name="Hayashi H."/>
        </authorList>
    </citation>
    <scope>NUCLEOTIDE SEQUENCE [LARGE SCALE GENOMIC DNA]</scope>
    <source>
        <strain>13 / Type A</strain>
    </source>
</reference>
<proteinExistence type="inferred from homology"/>
<name>GCH1L_CLOPE</name>
<dbReference type="EMBL" id="BA000016">
    <property type="protein sequence ID" value="BAB81710.1"/>
    <property type="molecule type" value="Genomic_DNA"/>
</dbReference>
<dbReference type="RefSeq" id="WP_004457831.1">
    <property type="nucleotide sequence ID" value="NC_003366.1"/>
</dbReference>
<dbReference type="SMR" id="Q8XIV9"/>
<dbReference type="STRING" id="195102.gene:10491274"/>
<dbReference type="KEGG" id="cpe:CPE2004"/>
<dbReference type="HOGENOM" id="CLU_037423_2_0_9"/>
<dbReference type="Proteomes" id="UP000000818">
    <property type="component" value="Chromosome"/>
</dbReference>
<dbReference type="GO" id="GO:0005737">
    <property type="term" value="C:cytoplasm"/>
    <property type="evidence" value="ECO:0007669"/>
    <property type="project" value="TreeGrafter"/>
</dbReference>
<dbReference type="GO" id="GO:0046872">
    <property type="term" value="F:metal ion binding"/>
    <property type="evidence" value="ECO:0007669"/>
    <property type="project" value="UniProtKB-KW"/>
</dbReference>
<dbReference type="FunFam" id="3.40.1390.30:FF:000001">
    <property type="entry name" value="GTP cyclohydrolase 1 type 2"/>
    <property type="match status" value="1"/>
</dbReference>
<dbReference type="Gene3D" id="3.40.1390.30">
    <property type="entry name" value="NIF3 (NGG1p interacting factor 3)-like"/>
    <property type="match status" value="2"/>
</dbReference>
<dbReference type="InterPro" id="IPR002678">
    <property type="entry name" value="DUF34/NIF3"/>
</dbReference>
<dbReference type="InterPro" id="IPR036069">
    <property type="entry name" value="DUF34/NIF3_sf"/>
</dbReference>
<dbReference type="NCBIfam" id="TIGR00486">
    <property type="entry name" value="YbgI_SA1388"/>
    <property type="match status" value="1"/>
</dbReference>
<dbReference type="PANTHER" id="PTHR13799:SF14">
    <property type="entry name" value="GTP CYCLOHYDROLASE 1 TYPE 2 HOMOLOG"/>
    <property type="match status" value="1"/>
</dbReference>
<dbReference type="PANTHER" id="PTHR13799">
    <property type="entry name" value="NGG1 INTERACTING FACTOR 3"/>
    <property type="match status" value="1"/>
</dbReference>
<dbReference type="Pfam" id="PF01784">
    <property type="entry name" value="DUF34_NIF3"/>
    <property type="match status" value="1"/>
</dbReference>
<dbReference type="SUPFAM" id="SSF102705">
    <property type="entry name" value="NIF3 (NGG1p interacting factor 3)-like"/>
    <property type="match status" value="1"/>
</dbReference>